<reference key="1">
    <citation type="journal article" date="1983" name="J. Biol. Chem.">
        <title>Isolation and characterization of two major serum proteins from the dogfish, Mustelus canis, C-reactive protein and amyloid P component.</title>
        <authorList>
            <person name="Robey F.A."/>
            <person name="Tanaka T."/>
            <person name="Liu T.-Y."/>
        </authorList>
    </citation>
    <scope>PROTEIN SEQUENCE</scope>
    <scope>FUNCTION</scope>
    <scope>SUBUNIT</scope>
    <scope>SUBCELLULAR LOCATION</scope>
</reference>
<feature type="chain" id="PRO_0000162501" description="C-reactive protein">
    <location>
        <begin position="1"/>
        <end position="20" status="greater than"/>
    </location>
</feature>
<feature type="domain" description="Pentraxin (PTX)">
    <location>
        <begin position="1"/>
        <end position="20" status="greater than"/>
    </location>
</feature>
<feature type="non-terminal residue">
    <location>
        <position position="20"/>
    </location>
</feature>
<accession>P19094</accession>
<sequence>SPVAASYRATAGLAGKALDF</sequence>
<evidence type="ECO:0000269" key="1">
    <source>
    </source>
</evidence>
<evidence type="ECO:0000305" key="2"/>
<proteinExistence type="evidence at protein level"/>
<keyword id="KW-0011">Acute phase</keyword>
<keyword id="KW-0106">Calcium</keyword>
<keyword id="KW-0903">Direct protein sequencing</keyword>
<keyword id="KW-1015">Disulfide bond</keyword>
<keyword id="KW-0325">Glycoprotein</keyword>
<keyword id="KW-0964">Secreted</keyword>
<dbReference type="PIR" id="A20569">
    <property type="entry name" value="A20569"/>
</dbReference>
<dbReference type="GO" id="GO:0005576">
    <property type="term" value="C:extracellular region"/>
    <property type="evidence" value="ECO:0007669"/>
    <property type="project" value="UniProtKB-SubCell"/>
</dbReference>
<dbReference type="GO" id="GO:0006953">
    <property type="term" value="P:acute-phase response"/>
    <property type="evidence" value="ECO:0007669"/>
    <property type="project" value="UniProtKB-KW"/>
</dbReference>
<name>CRP_MUSCA</name>
<comment type="function">
    <text evidence="1">Displays several functions associated with host defense: it promotes agglutination, bacterial capsular swelling, phagocytosis, and complement fixation through its calcium-dependent binding to phosphorylcholine.</text>
</comment>
<comment type="subunit">
    <text evidence="1">Homodimer; disulfide-linked. It is not known if it assembles into a pentraxin (or pentaxin) structure. Pentraxins have a discoid arrangement of 5 non-covalently bound subunits.</text>
</comment>
<comment type="subcellular location">
    <subcellularLocation>
        <location evidence="1">Secreted</location>
    </subcellularLocation>
</comment>
<comment type="PTM">
    <text>Glycosylated.</text>
</comment>
<comment type="similarity">
    <text evidence="2">Belongs to the pentraxin family.</text>
</comment>
<organism>
    <name type="scientific">Mustelus canis</name>
    <name type="common">Smooth dogfish</name>
    <name type="synonym">Squalus canis</name>
    <dbReference type="NCBI Taxonomy" id="7812"/>
    <lineage>
        <taxon>Eukaryota</taxon>
        <taxon>Metazoa</taxon>
        <taxon>Chordata</taxon>
        <taxon>Craniata</taxon>
        <taxon>Vertebrata</taxon>
        <taxon>Chondrichthyes</taxon>
        <taxon>Elasmobranchii</taxon>
        <taxon>Galeomorphii</taxon>
        <taxon>Galeoidea</taxon>
        <taxon>Carcharhiniformes</taxon>
        <taxon>Triakidae</taxon>
        <taxon>Mustelus</taxon>
    </lineage>
</organism>
<protein>
    <recommendedName>
        <fullName>C-reactive protein</fullName>
    </recommendedName>
</protein>